<dbReference type="EMBL" id="AM421808">
    <property type="protein sequence ID" value="CAM09428.1"/>
    <property type="molecule type" value="Genomic_DNA"/>
</dbReference>
<dbReference type="RefSeq" id="WP_002215351.1">
    <property type="nucleotide sequence ID" value="NC_008767.1"/>
</dbReference>
<dbReference type="SMR" id="A1KRF2"/>
<dbReference type="KEGG" id="nmc:NMC0109"/>
<dbReference type="HOGENOM" id="CLU_133242_0_0_4"/>
<dbReference type="Proteomes" id="UP000002286">
    <property type="component" value="Chromosome"/>
</dbReference>
<dbReference type="HAMAP" id="MF_00598">
    <property type="entry name" value="Smg"/>
    <property type="match status" value="1"/>
</dbReference>
<dbReference type="InterPro" id="IPR007456">
    <property type="entry name" value="Smg"/>
</dbReference>
<dbReference type="PANTHER" id="PTHR38692">
    <property type="entry name" value="PROTEIN SMG"/>
    <property type="match status" value="1"/>
</dbReference>
<dbReference type="PANTHER" id="PTHR38692:SF1">
    <property type="entry name" value="PROTEIN SMG"/>
    <property type="match status" value="1"/>
</dbReference>
<dbReference type="Pfam" id="PF04361">
    <property type="entry name" value="DUF494"/>
    <property type="match status" value="1"/>
</dbReference>
<evidence type="ECO:0000255" key="1">
    <source>
        <dbReference type="HAMAP-Rule" id="MF_00598"/>
    </source>
</evidence>
<accession>A1KRF2</accession>
<organism>
    <name type="scientific">Neisseria meningitidis serogroup C / serotype 2a (strain ATCC 700532 / DSM 15464 / FAM18)</name>
    <dbReference type="NCBI Taxonomy" id="272831"/>
    <lineage>
        <taxon>Bacteria</taxon>
        <taxon>Pseudomonadati</taxon>
        <taxon>Pseudomonadota</taxon>
        <taxon>Betaproteobacteria</taxon>
        <taxon>Neisseriales</taxon>
        <taxon>Neisseriaceae</taxon>
        <taxon>Neisseria</taxon>
    </lineage>
</organism>
<reference key="1">
    <citation type="journal article" date="2007" name="PLoS Genet.">
        <title>Meningococcal genetic variation mechanisms viewed through comparative analysis of serogroup C strain FAM18.</title>
        <authorList>
            <person name="Bentley S.D."/>
            <person name="Vernikos G.S."/>
            <person name="Snyder L.A.S."/>
            <person name="Churcher C."/>
            <person name="Arrowsmith C."/>
            <person name="Chillingworth T."/>
            <person name="Cronin A."/>
            <person name="Davis P.H."/>
            <person name="Holroyd N.E."/>
            <person name="Jagels K."/>
            <person name="Maddison M."/>
            <person name="Moule S."/>
            <person name="Rabbinowitsch E."/>
            <person name="Sharp S."/>
            <person name="Unwin L."/>
            <person name="Whitehead S."/>
            <person name="Quail M.A."/>
            <person name="Achtman M."/>
            <person name="Barrell B.G."/>
            <person name="Saunders N.J."/>
            <person name="Parkhill J."/>
        </authorList>
    </citation>
    <scope>NUCLEOTIDE SEQUENCE [LARGE SCALE GENOMIC DNA]</scope>
    <source>
        <strain>ATCC 700532 / DSM 15464 / FAM18</strain>
    </source>
</reference>
<gene>
    <name evidence="1" type="primary">smg</name>
    <name type="ordered locus">NMC0109</name>
</gene>
<sequence>MTEVIAYLIEHFQDFDTCPPPEDLGMLLEEAGFDTMEIGNTLMMMEVLLNSSEFSAEPADSGALRVYSKEETDNLPQEVMGLMQYLIEEKAVSCEQREIIIHALMHIPGDEITVDTAKVLTLLLLWANKSELPVLVGDELMSALLLDNKPTMN</sequence>
<protein>
    <recommendedName>
        <fullName evidence="1">Protein Smg homolog</fullName>
    </recommendedName>
</protein>
<name>SMG_NEIMF</name>
<feature type="chain" id="PRO_1000025656" description="Protein Smg homolog">
    <location>
        <begin position="1"/>
        <end position="153"/>
    </location>
</feature>
<proteinExistence type="inferred from homology"/>
<comment type="similarity">
    <text evidence="1">Belongs to the Smg family.</text>
</comment>